<proteinExistence type="inferred from homology"/>
<protein>
    <recommendedName>
        <fullName evidence="1">Large ribosomal subunit protein uL11</fullName>
    </recommendedName>
    <alternativeName>
        <fullName evidence="2">50S ribosomal protein L11</fullName>
    </alternativeName>
</protein>
<dbReference type="EMBL" id="CP000548">
    <property type="protein sequence ID" value="ABO06078.1"/>
    <property type="molecule type" value="Genomic_DNA"/>
</dbReference>
<dbReference type="RefSeq" id="WP_004198368.1">
    <property type="nucleotide sequence ID" value="NZ_CP007802.1"/>
</dbReference>
<dbReference type="SMR" id="A3MRU1"/>
<dbReference type="GeneID" id="93061845"/>
<dbReference type="KEGG" id="bmaz:BM44_3054"/>
<dbReference type="KEGG" id="bmn:BMA10247_3465"/>
<dbReference type="PATRIC" id="fig|320389.8.peg.3426"/>
<dbReference type="GO" id="GO:0022625">
    <property type="term" value="C:cytosolic large ribosomal subunit"/>
    <property type="evidence" value="ECO:0007669"/>
    <property type="project" value="TreeGrafter"/>
</dbReference>
<dbReference type="GO" id="GO:0070180">
    <property type="term" value="F:large ribosomal subunit rRNA binding"/>
    <property type="evidence" value="ECO:0007669"/>
    <property type="project" value="UniProtKB-UniRule"/>
</dbReference>
<dbReference type="GO" id="GO:0003735">
    <property type="term" value="F:structural constituent of ribosome"/>
    <property type="evidence" value="ECO:0007669"/>
    <property type="project" value="InterPro"/>
</dbReference>
<dbReference type="GO" id="GO:0006412">
    <property type="term" value="P:translation"/>
    <property type="evidence" value="ECO:0007669"/>
    <property type="project" value="UniProtKB-UniRule"/>
</dbReference>
<dbReference type="CDD" id="cd00349">
    <property type="entry name" value="Ribosomal_L11"/>
    <property type="match status" value="1"/>
</dbReference>
<dbReference type="FunFam" id="1.10.10.250:FF:000001">
    <property type="entry name" value="50S ribosomal protein L11"/>
    <property type="match status" value="1"/>
</dbReference>
<dbReference type="FunFam" id="3.30.1550.10:FF:000001">
    <property type="entry name" value="50S ribosomal protein L11"/>
    <property type="match status" value="1"/>
</dbReference>
<dbReference type="Gene3D" id="1.10.10.250">
    <property type="entry name" value="Ribosomal protein L11, C-terminal domain"/>
    <property type="match status" value="1"/>
</dbReference>
<dbReference type="Gene3D" id="3.30.1550.10">
    <property type="entry name" value="Ribosomal protein L11/L12, N-terminal domain"/>
    <property type="match status" value="1"/>
</dbReference>
<dbReference type="HAMAP" id="MF_00736">
    <property type="entry name" value="Ribosomal_uL11"/>
    <property type="match status" value="1"/>
</dbReference>
<dbReference type="InterPro" id="IPR000911">
    <property type="entry name" value="Ribosomal_uL11"/>
</dbReference>
<dbReference type="InterPro" id="IPR006519">
    <property type="entry name" value="Ribosomal_uL11_bac-typ"/>
</dbReference>
<dbReference type="InterPro" id="IPR020783">
    <property type="entry name" value="Ribosomal_uL11_C"/>
</dbReference>
<dbReference type="InterPro" id="IPR036769">
    <property type="entry name" value="Ribosomal_uL11_C_sf"/>
</dbReference>
<dbReference type="InterPro" id="IPR020785">
    <property type="entry name" value="Ribosomal_uL11_CS"/>
</dbReference>
<dbReference type="InterPro" id="IPR020784">
    <property type="entry name" value="Ribosomal_uL11_N"/>
</dbReference>
<dbReference type="InterPro" id="IPR036796">
    <property type="entry name" value="Ribosomal_uL11_N_sf"/>
</dbReference>
<dbReference type="NCBIfam" id="TIGR01632">
    <property type="entry name" value="L11_bact"/>
    <property type="match status" value="1"/>
</dbReference>
<dbReference type="PANTHER" id="PTHR11661">
    <property type="entry name" value="60S RIBOSOMAL PROTEIN L12"/>
    <property type="match status" value="1"/>
</dbReference>
<dbReference type="PANTHER" id="PTHR11661:SF1">
    <property type="entry name" value="LARGE RIBOSOMAL SUBUNIT PROTEIN UL11M"/>
    <property type="match status" value="1"/>
</dbReference>
<dbReference type="Pfam" id="PF00298">
    <property type="entry name" value="Ribosomal_L11"/>
    <property type="match status" value="1"/>
</dbReference>
<dbReference type="Pfam" id="PF03946">
    <property type="entry name" value="Ribosomal_L11_N"/>
    <property type="match status" value="1"/>
</dbReference>
<dbReference type="SMART" id="SM00649">
    <property type="entry name" value="RL11"/>
    <property type="match status" value="1"/>
</dbReference>
<dbReference type="SUPFAM" id="SSF54747">
    <property type="entry name" value="Ribosomal L11/L12e N-terminal domain"/>
    <property type="match status" value="1"/>
</dbReference>
<dbReference type="SUPFAM" id="SSF46906">
    <property type="entry name" value="Ribosomal protein L11, C-terminal domain"/>
    <property type="match status" value="1"/>
</dbReference>
<dbReference type="PROSITE" id="PS00359">
    <property type="entry name" value="RIBOSOMAL_L11"/>
    <property type="match status" value="1"/>
</dbReference>
<evidence type="ECO:0000255" key="1">
    <source>
        <dbReference type="HAMAP-Rule" id="MF_00736"/>
    </source>
</evidence>
<evidence type="ECO:0000305" key="2"/>
<sequence length="143" mass="14959">MAKKIVGFIKLQIPAGKANPSPPVGPALGQRGLNIMEFCKAFNAQTQGMEPGLPVPVVITAYADKSFTFVMKTPPATVLIKKAAKVDKGSSKPHTDKVGKITRAQAEEIAKTKMPDLTAADLDAAVRTIAGSARSMGITVEGV</sequence>
<keyword id="KW-0488">Methylation</keyword>
<keyword id="KW-0687">Ribonucleoprotein</keyword>
<keyword id="KW-0689">Ribosomal protein</keyword>
<keyword id="KW-0694">RNA-binding</keyword>
<keyword id="KW-0699">rRNA-binding</keyword>
<accession>A3MRU1</accession>
<name>RL11_BURM7</name>
<feature type="chain" id="PRO_1000046151" description="Large ribosomal subunit protein uL11">
    <location>
        <begin position="1"/>
        <end position="143"/>
    </location>
</feature>
<comment type="function">
    <text evidence="1">Forms part of the ribosomal stalk which helps the ribosome interact with GTP-bound translation factors.</text>
</comment>
<comment type="subunit">
    <text evidence="1">Part of the ribosomal stalk of the 50S ribosomal subunit. Interacts with L10 and the large rRNA to form the base of the stalk. L10 forms an elongated spine to which L12 dimers bind in a sequential fashion forming a multimeric L10(L12)X complex.</text>
</comment>
<comment type="PTM">
    <text evidence="1">One or more lysine residues are methylated.</text>
</comment>
<comment type="similarity">
    <text evidence="1">Belongs to the universal ribosomal protein uL11 family.</text>
</comment>
<organism>
    <name type="scientific">Burkholderia mallei (strain NCTC 10247)</name>
    <dbReference type="NCBI Taxonomy" id="320389"/>
    <lineage>
        <taxon>Bacteria</taxon>
        <taxon>Pseudomonadati</taxon>
        <taxon>Pseudomonadota</taxon>
        <taxon>Betaproteobacteria</taxon>
        <taxon>Burkholderiales</taxon>
        <taxon>Burkholderiaceae</taxon>
        <taxon>Burkholderia</taxon>
        <taxon>pseudomallei group</taxon>
    </lineage>
</organism>
<reference key="1">
    <citation type="journal article" date="2010" name="Genome Biol. Evol.">
        <title>Continuing evolution of Burkholderia mallei through genome reduction and large-scale rearrangements.</title>
        <authorList>
            <person name="Losada L."/>
            <person name="Ronning C.M."/>
            <person name="DeShazer D."/>
            <person name="Woods D."/>
            <person name="Fedorova N."/>
            <person name="Kim H.S."/>
            <person name="Shabalina S.A."/>
            <person name="Pearson T.R."/>
            <person name="Brinkac L."/>
            <person name="Tan P."/>
            <person name="Nandi T."/>
            <person name="Crabtree J."/>
            <person name="Badger J."/>
            <person name="Beckstrom-Sternberg S."/>
            <person name="Saqib M."/>
            <person name="Schutzer S.E."/>
            <person name="Keim P."/>
            <person name="Nierman W.C."/>
        </authorList>
    </citation>
    <scope>NUCLEOTIDE SEQUENCE [LARGE SCALE GENOMIC DNA]</scope>
    <source>
        <strain>NCTC 10247</strain>
    </source>
</reference>
<gene>
    <name evidence="1" type="primary">rplK</name>
    <name type="ordered locus">BMA10247_3465</name>
</gene>